<name>MURG_THEYD</name>
<dbReference type="EC" id="2.4.1.227" evidence="1"/>
<dbReference type="EMBL" id="CP001147">
    <property type="protein sequence ID" value="ACI20699.1"/>
    <property type="molecule type" value="Genomic_DNA"/>
</dbReference>
<dbReference type="RefSeq" id="WP_012545433.1">
    <property type="nucleotide sequence ID" value="NC_011296.1"/>
</dbReference>
<dbReference type="RefSeq" id="YP_002249132.1">
    <property type="nucleotide sequence ID" value="NC_011296.1"/>
</dbReference>
<dbReference type="SMR" id="B5YFT4"/>
<dbReference type="FunCoup" id="B5YFT4">
    <property type="interactions" value="284"/>
</dbReference>
<dbReference type="STRING" id="289376.THEYE_A1322"/>
<dbReference type="CAZy" id="GT28">
    <property type="family name" value="Glycosyltransferase Family 28"/>
</dbReference>
<dbReference type="EnsemblBacteria" id="ACI20699">
    <property type="protein sequence ID" value="ACI20699"/>
    <property type="gene ID" value="THEYE_A1322"/>
</dbReference>
<dbReference type="KEGG" id="tye:THEYE_A1322"/>
<dbReference type="PATRIC" id="fig|289376.4.peg.1289"/>
<dbReference type="eggNOG" id="COG0707">
    <property type="taxonomic scope" value="Bacteria"/>
</dbReference>
<dbReference type="HOGENOM" id="CLU_037404_0_1_0"/>
<dbReference type="InParanoid" id="B5YFT4"/>
<dbReference type="OrthoDB" id="9808936at2"/>
<dbReference type="UniPathway" id="UPA00219"/>
<dbReference type="Proteomes" id="UP000000718">
    <property type="component" value="Chromosome"/>
</dbReference>
<dbReference type="GO" id="GO:0005886">
    <property type="term" value="C:plasma membrane"/>
    <property type="evidence" value="ECO:0007669"/>
    <property type="project" value="UniProtKB-SubCell"/>
</dbReference>
<dbReference type="GO" id="GO:0016757">
    <property type="term" value="F:glycosyltransferase activity"/>
    <property type="evidence" value="ECO:0000318"/>
    <property type="project" value="GO_Central"/>
</dbReference>
<dbReference type="GO" id="GO:0051991">
    <property type="term" value="F:UDP-N-acetyl-D-glucosamine:N-acetylmuramoyl-L-alanyl-D-glutamyl-meso-2,6-diaminopimelyl-D-alanyl-D-alanine-diphosphoundecaprenol 4-beta-N-acetylglucosaminlytransferase activity"/>
    <property type="evidence" value="ECO:0007669"/>
    <property type="project" value="RHEA"/>
</dbReference>
<dbReference type="GO" id="GO:0050511">
    <property type="term" value="F:undecaprenyldiphospho-muramoylpentapeptide beta-N-acetylglucosaminyltransferase activity"/>
    <property type="evidence" value="ECO:0007669"/>
    <property type="project" value="UniProtKB-UniRule"/>
</dbReference>
<dbReference type="GO" id="GO:0005975">
    <property type="term" value="P:carbohydrate metabolic process"/>
    <property type="evidence" value="ECO:0007669"/>
    <property type="project" value="InterPro"/>
</dbReference>
<dbReference type="GO" id="GO:0051301">
    <property type="term" value="P:cell division"/>
    <property type="evidence" value="ECO:0007669"/>
    <property type="project" value="UniProtKB-KW"/>
</dbReference>
<dbReference type="GO" id="GO:0071555">
    <property type="term" value="P:cell wall organization"/>
    <property type="evidence" value="ECO:0007669"/>
    <property type="project" value="UniProtKB-KW"/>
</dbReference>
<dbReference type="GO" id="GO:0030259">
    <property type="term" value="P:lipid glycosylation"/>
    <property type="evidence" value="ECO:0007669"/>
    <property type="project" value="UniProtKB-UniRule"/>
</dbReference>
<dbReference type="GO" id="GO:0009252">
    <property type="term" value="P:peptidoglycan biosynthetic process"/>
    <property type="evidence" value="ECO:0007669"/>
    <property type="project" value="UniProtKB-UniRule"/>
</dbReference>
<dbReference type="GO" id="GO:0008360">
    <property type="term" value="P:regulation of cell shape"/>
    <property type="evidence" value="ECO:0007669"/>
    <property type="project" value="UniProtKB-KW"/>
</dbReference>
<dbReference type="CDD" id="cd03785">
    <property type="entry name" value="GT28_MurG"/>
    <property type="match status" value="1"/>
</dbReference>
<dbReference type="Gene3D" id="3.40.50.2000">
    <property type="entry name" value="Glycogen Phosphorylase B"/>
    <property type="match status" value="2"/>
</dbReference>
<dbReference type="HAMAP" id="MF_00033">
    <property type="entry name" value="MurG"/>
    <property type="match status" value="1"/>
</dbReference>
<dbReference type="InterPro" id="IPR006009">
    <property type="entry name" value="GlcNAc_MurG"/>
</dbReference>
<dbReference type="InterPro" id="IPR007235">
    <property type="entry name" value="Glyco_trans_28_C"/>
</dbReference>
<dbReference type="InterPro" id="IPR004276">
    <property type="entry name" value="GlycoTrans_28_N"/>
</dbReference>
<dbReference type="NCBIfam" id="TIGR01133">
    <property type="entry name" value="murG"/>
    <property type="match status" value="1"/>
</dbReference>
<dbReference type="PANTHER" id="PTHR21015:SF22">
    <property type="entry name" value="GLYCOSYLTRANSFERASE"/>
    <property type="match status" value="1"/>
</dbReference>
<dbReference type="PANTHER" id="PTHR21015">
    <property type="entry name" value="UDP-N-ACETYLGLUCOSAMINE--N-ACETYLMURAMYL-(PENTAPEPTIDE) PYROPHOSPHORYL-UNDECAPRENOL N-ACETYLGLUCOSAMINE TRANSFERASE 1"/>
    <property type="match status" value="1"/>
</dbReference>
<dbReference type="Pfam" id="PF04101">
    <property type="entry name" value="Glyco_tran_28_C"/>
    <property type="match status" value="1"/>
</dbReference>
<dbReference type="Pfam" id="PF03033">
    <property type="entry name" value="Glyco_transf_28"/>
    <property type="match status" value="1"/>
</dbReference>
<dbReference type="SUPFAM" id="SSF53756">
    <property type="entry name" value="UDP-Glycosyltransferase/glycogen phosphorylase"/>
    <property type="match status" value="1"/>
</dbReference>
<sequence>MRVIIAGGGTGGHLFPGIALAESLIGKYPEAQIIFVGTPKGLEAKVIPKTGYELSFISIQGFVGKSFSEKAKSLKSLLKSMFESKNIINSFAPDIVFGVGGYASFPVVLAAFLKKIPTIILEQNTVPGLANKLLGKIASAVAITYPETIEYFSREKTYLTGTPIRKKILEGNKEKAKKLFDIEEGRITILILGGSLGARKINKAMTEGLSYLLPLKNRIQIIHQTGEADYNWVYNEYRNLSFRATVLPFIYDMVEAYSVADLVISRAGASTVAELTAIGKASILIPYPYAAYNHQEMNARRLLSRGACELILDRELNGEVLAKKINKILNKPEIMKEMEMASLAFGKPYAGEKIIEIAESLLRRKR</sequence>
<comment type="function">
    <text evidence="1">Cell wall formation. Catalyzes the transfer of a GlcNAc subunit on undecaprenyl-pyrophosphoryl-MurNAc-pentapeptide (lipid intermediate I) to form undecaprenyl-pyrophosphoryl-MurNAc-(pentapeptide)GlcNAc (lipid intermediate II).</text>
</comment>
<comment type="catalytic activity">
    <reaction evidence="1">
        <text>di-trans,octa-cis-undecaprenyl diphospho-N-acetyl-alpha-D-muramoyl-L-alanyl-D-glutamyl-meso-2,6-diaminopimeloyl-D-alanyl-D-alanine + UDP-N-acetyl-alpha-D-glucosamine = di-trans,octa-cis-undecaprenyl diphospho-[N-acetyl-alpha-D-glucosaminyl-(1-&gt;4)]-N-acetyl-alpha-D-muramoyl-L-alanyl-D-glutamyl-meso-2,6-diaminopimeloyl-D-alanyl-D-alanine + UDP + H(+)</text>
        <dbReference type="Rhea" id="RHEA:31227"/>
        <dbReference type="ChEBI" id="CHEBI:15378"/>
        <dbReference type="ChEBI" id="CHEBI:57705"/>
        <dbReference type="ChEBI" id="CHEBI:58223"/>
        <dbReference type="ChEBI" id="CHEBI:61387"/>
        <dbReference type="ChEBI" id="CHEBI:61388"/>
        <dbReference type="EC" id="2.4.1.227"/>
    </reaction>
</comment>
<comment type="pathway">
    <text evidence="1">Cell wall biogenesis; peptidoglycan biosynthesis.</text>
</comment>
<comment type="subcellular location">
    <subcellularLocation>
        <location evidence="1">Cell inner membrane</location>
        <topology evidence="1">Peripheral membrane protein</topology>
        <orientation evidence="1">Cytoplasmic side</orientation>
    </subcellularLocation>
</comment>
<comment type="similarity">
    <text evidence="1">Belongs to the glycosyltransferase 28 family. MurG subfamily.</text>
</comment>
<reference key="1">
    <citation type="submission" date="2008-08" db="EMBL/GenBank/DDBJ databases">
        <title>The complete genome sequence of Thermodesulfovibrio yellowstonii strain ATCC 51303 / DSM 11347 / YP87.</title>
        <authorList>
            <person name="Dodson R.J."/>
            <person name="Durkin A.S."/>
            <person name="Wu M."/>
            <person name="Eisen J."/>
            <person name="Sutton G."/>
        </authorList>
    </citation>
    <scope>NUCLEOTIDE SEQUENCE [LARGE SCALE GENOMIC DNA]</scope>
    <source>
        <strain>ATCC 51303 / DSM 11347 / YP87</strain>
    </source>
</reference>
<organism>
    <name type="scientific">Thermodesulfovibrio yellowstonii (strain ATCC 51303 / DSM 11347 / YP87)</name>
    <dbReference type="NCBI Taxonomy" id="289376"/>
    <lineage>
        <taxon>Bacteria</taxon>
        <taxon>Pseudomonadati</taxon>
        <taxon>Nitrospirota</taxon>
        <taxon>Thermodesulfovibrionia</taxon>
        <taxon>Thermodesulfovibrionales</taxon>
        <taxon>Thermodesulfovibrionaceae</taxon>
        <taxon>Thermodesulfovibrio</taxon>
    </lineage>
</organism>
<gene>
    <name evidence="1" type="primary">murG</name>
    <name type="ordered locus">THEYE_A1322</name>
</gene>
<feature type="chain" id="PRO_1000090483" description="UDP-N-acetylglucosamine--N-acetylmuramyl-(pentapeptide) pyrophosphoryl-undecaprenol N-acetylglucosamine transferase">
    <location>
        <begin position="1"/>
        <end position="366"/>
    </location>
</feature>
<feature type="binding site" evidence="1">
    <location>
        <begin position="10"/>
        <end position="12"/>
    </location>
    <ligand>
        <name>UDP-N-acetyl-alpha-D-glucosamine</name>
        <dbReference type="ChEBI" id="CHEBI:57705"/>
    </ligand>
</feature>
<feature type="binding site" evidence="1">
    <location>
        <position position="124"/>
    </location>
    <ligand>
        <name>UDP-N-acetyl-alpha-D-glucosamine</name>
        <dbReference type="ChEBI" id="CHEBI:57705"/>
    </ligand>
</feature>
<feature type="binding site" evidence="1">
    <location>
        <position position="165"/>
    </location>
    <ligand>
        <name>UDP-N-acetyl-alpha-D-glucosamine</name>
        <dbReference type="ChEBI" id="CHEBI:57705"/>
    </ligand>
</feature>
<feature type="binding site" evidence="1">
    <location>
        <position position="195"/>
    </location>
    <ligand>
        <name>UDP-N-acetyl-alpha-D-glucosamine</name>
        <dbReference type="ChEBI" id="CHEBI:57705"/>
    </ligand>
</feature>
<feature type="binding site" evidence="1">
    <location>
        <position position="250"/>
    </location>
    <ligand>
        <name>UDP-N-acetyl-alpha-D-glucosamine</name>
        <dbReference type="ChEBI" id="CHEBI:57705"/>
    </ligand>
</feature>
<feature type="binding site" evidence="1">
    <location>
        <position position="295"/>
    </location>
    <ligand>
        <name>UDP-N-acetyl-alpha-D-glucosamine</name>
        <dbReference type="ChEBI" id="CHEBI:57705"/>
    </ligand>
</feature>
<accession>B5YFT4</accession>
<evidence type="ECO:0000255" key="1">
    <source>
        <dbReference type="HAMAP-Rule" id="MF_00033"/>
    </source>
</evidence>
<keyword id="KW-0131">Cell cycle</keyword>
<keyword id="KW-0132">Cell division</keyword>
<keyword id="KW-0997">Cell inner membrane</keyword>
<keyword id="KW-1003">Cell membrane</keyword>
<keyword id="KW-0133">Cell shape</keyword>
<keyword id="KW-0961">Cell wall biogenesis/degradation</keyword>
<keyword id="KW-0328">Glycosyltransferase</keyword>
<keyword id="KW-0472">Membrane</keyword>
<keyword id="KW-0573">Peptidoglycan synthesis</keyword>
<keyword id="KW-1185">Reference proteome</keyword>
<keyword id="KW-0808">Transferase</keyword>
<protein>
    <recommendedName>
        <fullName evidence="1">UDP-N-acetylglucosamine--N-acetylmuramyl-(pentapeptide) pyrophosphoryl-undecaprenol N-acetylglucosamine transferase</fullName>
        <ecNumber evidence="1">2.4.1.227</ecNumber>
    </recommendedName>
    <alternativeName>
        <fullName evidence="1">Undecaprenyl-PP-MurNAc-pentapeptide-UDPGlcNAc GlcNAc transferase</fullName>
    </alternativeName>
</protein>
<proteinExistence type="inferred from homology"/>